<organism>
    <name type="scientific">Aquifex aeolicus (strain VF5)</name>
    <dbReference type="NCBI Taxonomy" id="224324"/>
    <lineage>
        <taxon>Bacteria</taxon>
        <taxon>Pseudomonadati</taxon>
        <taxon>Aquificota</taxon>
        <taxon>Aquificia</taxon>
        <taxon>Aquificales</taxon>
        <taxon>Aquificaceae</taxon>
        <taxon>Aquifex</taxon>
    </lineage>
</organism>
<name>TILS_AQUAE</name>
<gene>
    <name evidence="1" type="primary">tilS</name>
    <name type="ordered locus">aq_1887</name>
</gene>
<proteinExistence type="evidence at protein level"/>
<keyword id="KW-0002">3D-structure</keyword>
<keyword id="KW-0067">ATP-binding</keyword>
<keyword id="KW-0963">Cytoplasm</keyword>
<keyword id="KW-0436">Ligase</keyword>
<keyword id="KW-0547">Nucleotide-binding</keyword>
<keyword id="KW-1185">Reference proteome</keyword>
<keyword id="KW-0819">tRNA processing</keyword>
<protein>
    <recommendedName>
        <fullName evidence="1">tRNA(Ile)-lysidine synthase</fullName>
        <ecNumber evidence="1">6.3.4.19</ecNumber>
    </recommendedName>
    <alternativeName>
        <fullName evidence="1">tRNA(Ile)-2-lysyl-cytidine synthase</fullName>
    </alternativeName>
    <alternativeName>
        <fullName evidence="1">tRNA(Ile)-lysidine synthetase</fullName>
    </alternativeName>
</protein>
<evidence type="ECO:0000255" key="1">
    <source>
        <dbReference type="HAMAP-Rule" id="MF_01161"/>
    </source>
</evidence>
<evidence type="ECO:0007829" key="2">
    <source>
        <dbReference type="PDB" id="1WY5"/>
    </source>
</evidence>
<evidence type="ECO:0007829" key="3">
    <source>
        <dbReference type="PDB" id="2E89"/>
    </source>
</evidence>
<dbReference type="EC" id="6.3.4.19" evidence="1"/>
<dbReference type="EMBL" id="AE000657">
    <property type="protein sequence ID" value="AAC07685.1"/>
    <property type="molecule type" value="Genomic_DNA"/>
</dbReference>
<dbReference type="PIR" id="F70462">
    <property type="entry name" value="F70462"/>
</dbReference>
<dbReference type="RefSeq" id="NP_214296.1">
    <property type="nucleotide sequence ID" value="NC_000918.1"/>
</dbReference>
<dbReference type="RefSeq" id="WP_010881232.1">
    <property type="nucleotide sequence ID" value="NC_000918.1"/>
</dbReference>
<dbReference type="PDB" id="1WY5">
    <property type="method" value="X-ray"/>
    <property type="resolution" value="2.42 A"/>
    <property type="chains" value="A/B=1-317"/>
</dbReference>
<dbReference type="PDB" id="2E21">
    <property type="method" value="X-ray"/>
    <property type="resolution" value="2.70 A"/>
    <property type="chains" value="A/B/C/D=1-317"/>
</dbReference>
<dbReference type="PDB" id="2E89">
    <property type="method" value="X-ray"/>
    <property type="resolution" value="2.50 A"/>
    <property type="chains" value="A/B/C/D=1-317"/>
</dbReference>
<dbReference type="PDBsum" id="1WY5"/>
<dbReference type="PDBsum" id="2E21"/>
<dbReference type="PDBsum" id="2E89"/>
<dbReference type="SMR" id="O67728"/>
<dbReference type="DIP" id="DIP-29530N"/>
<dbReference type="STRING" id="224324.aq_1887"/>
<dbReference type="EnsemblBacteria" id="AAC07685">
    <property type="protein sequence ID" value="AAC07685"/>
    <property type="gene ID" value="aq_1887"/>
</dbReference>
<dbReference type="KEGG" id="aae:aq_1887"/>
<dbReference type="PATRIC" id="fig|224324.8.peg.1462"/>
<dbReference type="eggNOG" id="COG0037">
    <property type="taxonomic scope" value="Bacteria"/>
</dbReference>
<dbReference type="HOGENOM" id="CLU_018869_0_0_0"/>
<dbReference type="InParanoid" id="O67728"/>
<dbReference type="OrthoDB" id="9807403at2"/>
<dbReference type="BRENDA" id="6.3.4.19">
    <property type="organism ID" value="396"/>
</dbReference>
<dbReference type="EvolutionaryTrace" id="O67728"/>
<dbReference type="Proteomes" id="UP000000798">
    <property type="component" value="Chromosome"/>
</dbReference>
<dbReference type="GO" id="GO:0005737">
    <property type="term" value="C:cytoplasm"/>
    <property type="evidence" value="ECO:0007669"/>
    <property type="project" value="UniProtKB-SubCell"/>
</dbReference>
<dbReference type="GO" id="GO:0005524">
    <property type="term" value="F:ATP binding"/>
    <property type="evidence" value="ECO:0007669"/>
    <property type="project" value="UniProtKB-UniRule"/>
</dbReference>
<dbReference type="GO" id="GO:0032267">
    <property type="term" value="F:tRNA(Ile)-lysidine synthase activity"/>
    <property type="evidence" value="ECO:0007669"/>
    <property type="project" value="UniProtKB-EC"/>
</dbReference>
<dbReference type="GO" id="GO:0006400">
    <property type="term" value="P:tRNA modification"/>
    <property type="evidence" value="ECO:0007669"/>
    <property type="project" value="UniProtKB-UniRule"/>
</dbReference>
<dbReference type="CDD" id="cd01992">
    <property type="entry name" value="TilS_N"/>
    <property type="match status" value="1"/>
</dbReference>
<dbReference type="Gene3D" id="1.20.59.20">
    <property type="match status" value="1"/>
</dbReference>
<dbReference type="Gene3D" id="3.40.50.620">
    <property type="entry name" value="HUPs"/>
    <property type="match status" value="1"/>
</dbReference>
<dbReference type="HAMAP" id="MF_01161">
    <property type="entry name" value="tRNA_Ile_lys_synt"/>
    <property type="match status" value="1"/>
</dbReference>
<dbReference type="InterPro" id="IPR014729">
    <property type="entry name" value="Rossmann-like_a/b/a_fold"/>
</dbReference>
<dbReference type="InterPro" id="IPR054377">
    <property type="entry name" value="TilS-like_C"/>
</dbReference>
<dbReference type="InterPro" id="IPR011063">
    <property type="entry name" value="TilS/TtcA_N"/>
</dbReference>
<dbReference type="InterPro" id="IPR012094">
    <property type="entry name" value="tRNA_Ile_lys_synt"/>
</dbReference>
<dbReference type="InterPro" id="IPR012795">
    <property type="entry name" value="tRNA_Ile_lys_synt_N"/>
</dbReference>
<dbReference type="NCBIfam" id="TIGR02432">
    <property type="entry name" value="lysidine_TilS_N"/>
    <property type="match status" value="1"/>
</dbReference>
<dbReference type="PANTHER" id="PTHR43033">
    <property type="entry name" value="TRNA(ILE)-LYSIDINE SYNTHASE-RELATED"/>
    <property type="match status" value="1"/>
</dbReference>
<dbReference type="PANTHER" id="PTHR43033:SF1">
    <property type="entry name" value="TRNA(ILE)-LYSIDINE SYNTHASE-RELATED"/>
    <property type="match status" value="1"/>
</dbReference>
<dbReference type="Pfam" id="PF01171">
    <property type="entry name" value="ATP_bind_3"/>
    <property type="match status" value="1"/>
</dbReference>
<dbReference type="Pfam" id="PF22132">
    <property type="entry name" value="TilS-like"/>
    <property type="match status" value="1"/>
</dbReference>
<dbReference type="SUPFAM" id="SSF52402">
    <property type="entry name" value="Adenine nucleotide alpha hydrolases-like"/>
    <property type="match status" value="1"/>
</dbReference>
<dbReference type="SUPFAM" id="SSF82829">
    <property type="entry name" value="MesJ substrate recognition domain-like"/>
    <property type="match status" value="1"/>
</dbReference>
<reference key="1">
    <citation type="journal article" date="1998" name="Nature">
        <title>The complete genome of the hyperthermophilic bacterium Aquifex aeolicus.</title>
        <authorList>
            <person name="Deckert G."/>
            <person name="Warren P.V."/>
            <person name="Gaasterland T."/>
            <person name="Young W.G."/>
            <person name="Lenox A.L."/>
            <person name="Graham D.E."/>
            <person name="Overbeek R."/>
            <person name="Snead M.A."/>
            <person name="Keller M."/>
            <person name="Aujay M."/>
            <person name="Huber R."/>
            <person name="Feldman R.A."/>
            <person name="Short J.M."/>
            <person name="Olsen G.J."/>
            <person name="Swanson R.V."/>
        </authorList>
    </citation>
    <scope>NUCLEOTIDE SEQUENCE [LARGE SCALE GENOMIC DNA]</scope>
    <source>
        <strain>VF5</strain>
    </source>
</reference>
<feature type="chain" id="PRO_0000181639" description="tRNA(Ile)-lysidine synthase">
    <location>
        <begin position="1"/>
        <end position="317"/>
    </location>
</feature>
<feature type="binding site" evidence="1">
    <location>
        <begin position="32"/>
        <end position="37"/>
    </location>
    <ligand>
        <name>ATP</name>
        <dbReference type="ChEBI" id="CHEBI:30616"/>
    </ligand>
</feature>
<feature type="helix" evidence="2">
    <location>
        <begin position="3"/>
        <end position="18"/>
    </location>
</feature>
<feature type="strand" evidence="2">
    <location>
        <begin position="26"/>
        <end position="30"/>
    </location>
</feature>
<feature type="helix" evidence="2">
    <location>
        <begin position="35"/>
        <end position="46"/>
    </location>
</feature>
<feature type="turn" evidence="2">
    <location>
        <begin position="48"/>
        <end position="52"/>
    </location>
</feature>
<feature type="strand" evidence="2">
    <location>
        <begin position="54"/>
        <end position="62"/>
    </location>
</feature>
<feature type="helix" evidence="2">
    <location>
        <begin position="68"/>
        <end position="83"/>
    </location>
</feature>
<feature type="strand" evidence="2">
    <location>
        <begin position="87"/>
        <end position="91"/>
    </location>
</feature>
<feature type="helix" evidence="2">
    <location>
        <begin position="94"/>
        <end position="100"/>
    </location>
</feature>
<feature type="helix" evidence="2">
    <location>
        <begin position="105"/>
        <end position="123"/>
    </location>
</feature>
<feature type="strand" evidence="2">
    <location>
        <begin position="127"/>
        <end position="130"/>
    </location>
</feature>
<feature type="helix" evidence="2">
    <location>
        <begin position="135"/>
        <end position="148"/>
    </location>
</feature>
<feature type="helix" evidence="2">
    <location>
        <begin position="152"/>
        <end position="156"/>
    </location>
</feature>
<feature type="strand" evidence="2">
    <location>
        <begin position="160"/>
        <end position="162"/>
    </location>
</feature>
<feature type="turn" evidence="2">
    <location>
        <begin position="168"/>
        <end position="171"/>
    </location>
</feature>
<feature type="helix" evidence="2">
    <location>
        <begin position="174"/>
        <end position="183"/>
    </location>
</feature>
<feature type="helix" evidence="2">
    <location>
        <begin position="192"/>
        <end position="195"/>
    </location>
</feature>
<feature type="helix" evidence="2">
    <location>
        <begin position="199"/>
        <end position="206"/>
    </location>
</feature>
<feature type="helix" evidence="2">
    <location>
        <begin position="208"/>
        <end position="215"/>
    </location>
</feature>
<feature type="helix" evidence="2">
    <location>
        <begin position="219"/>
        <end position="248"/>
    </location>
</feature>
<feature type="strand" evidence="3">
    <location>
        <begin position="253"/>
        <end position="255"/>
    </location>
</feature>
<feature type="helix" evidence="2">
    <location>
        <begin position="256"/>
        <end position="259"/>
    </location>
</feature>
<feature type="helix" evidence="2">
    <location>
        <begin position="264"/>
        <end position="275"/>
    </location>
</feature>
<feature type="helix" evidence="2">
    <location>
        <begin position="280"/>
        <end position="287"/>
    </location>
</feature>
<feature type="helix" evidence="2">
    <location>
        <begin position="288"/>
        <end position="290"/>
    </location>
</feature>
<feature type="strand" evidence="2">
    <location>
        <begin position="295"/>
        <end position="305"/>
    </location>
</feature>
<feature type="strand" evidence="2">
    <location>
        <begin position="308"/>
        <end position="310"/>
    </location>
</feature>
<comment type="function">
    <text evidence="1">Ligates lysine onto the cytidine present at position 34 of the AUA codon-specific tRNA(Ile) that contains the anticodon CAU, in an ATP-dependent manner. Cytidine is converted to lysidine, thus changing the amino acid specificity of the tRNA from methionine to isoleucine.</text>
</comment>
<comment type="catalytic activity">
    <reaction evidence="1">
        <text>cytidine(34) in tRNA(Ile2) + L-lysine + ATP = lysidine(34) in tRNA(Ile2) + AMP + diphosphate + H(+)</text>
        <dbReference type="Rhea" id="RHEA:43744"/>
        <dbReference type="Rhea" id="RHEA-COMP:10625"/>
        <dbReference type="Rhea" id="RHEA-COMP:10670"/>
        <dbReference type="ChEBI" id="CHEBI:15378"/>
        <dbReference type="ChEBI" id="CHEBI:30616"/>
        <dbReference type="ChEBI" id="CHEBI:32551"/>
        <dbReference type="ChEBI" id="CHEBI:33019"/>
        <dbReference type="ChEBI" id="CHEBI:82748"/>
        <dbReference type="ChEBI" id="CHEBI:83665"/>
        <dbReference type="ChEBI" id="CHEBI:456215"/>
        <dbReference type="EC" id="6.3.4.19"/>
    </reaction>
</comment>
<comment type="subcellular location">
    <subcellularLocation>
        <location evidence="1">Cytoplasm</location>
    </subcellularLocation>
</comment>
<comment type="domain">
    <text>The N-terminal region contains the highly conserved SGGXDS motif, predicted to be a P-loop motif involved in ATP binding.</text>
</comment>
<comment type="similarity">
    <text evidence="1">Belongs to the tRNA(Ile)-lysidine synthase family.</text>
</comment>
<sequence>MNPESRVIRKVLALQNDEKIFSGERRVLIAFSGGVDSVVLTDVLLKLKNYFSLKEVALAHFNHMLRESAERDEEFCKEFAKERNMKIFVGKEDVRAFAKENRMSLEEAGRFLRYKFLKEILESEGFDCIATAHHLNDLLETSLLFFTRGTGLDGLIGFLPKEEVIRRPLYYVKRSEIEEYAKFKGLRWVEDETNYEVSIPRNRIRHRVIPELKRINENLEDTFLKMVKVLRAEREFLEEEAQKLYKEVKKGNCLDVKKLKEKPLALQRRVIRKFIGEKDYEKVELVRSLLEKGGEVNLGKGKVLKRKERWLCFSPEV</sequence>
<accession>O67728</accession>